<keyword id="KW-0067">ATP-binding</keyword>
<keyword id="KW-0342">GTP-binding</keyword>
<keyword id="KW-0547">Nucleotide-binding</keyword>
<keyword id="KW-0694">RNA-binding</keyword>
<proteinExistence type="inferred from homology"/>
<comment type="function">
    <text evidence="1">Modulates the synthesis of GlmS, by affecting the processing and stability of the regulatory small RNA GlmZ. When glucosamine-6-phosphate (GlcN6P) concentrations are high in the cell, RapZ binds GlmZ and targets it to cleavage by RNase E. Consequently, GlmZ is inactivated and unable to activate GlmS synthesis. Under low GlcN6P concentrations, RapZ is sequestered and inactivated by an other regulatory small RNA, GlmY, preventing GlmZ degradation and leading to synthesis of GlmS.</text>
</comment>
<comment type="subunit">
    <text evidence="1">Homotrimer.</text>
</comment>
<comment type="similarity">
    <text evidence="1">Belongs to the RapZ-like family. RapZ subfamily.</text>
</comment>
<sequence>MVLMIVSGRSGSGKSVALRALEDMGFYCVDNLPVVLLPDLARTLADREISAAVSIDVRNMPESPEIFEQAMSNLPDAFSPQLLFLDADRNTLIRRYSDTRRLHPLSSKNLSLESAIDKESDLLEPLRSRADLIVDTSEMSVHELAEMLRTRLLGKRERELTMVFESFGFKHGIPIDADYVFDVRFLPNPHWDPKLRPMTGLDKPVAAFLDRHTEVHNFIYQTRSYLELWLPMLETNNRSYLTVAIGCTGGKHRSVYIAEQLADYFRSRGKNVQSRHRTLEKRKP</sequence>
<evidence type="ECO:0000255" key="1">
    <source>
        <dbReference type="HAMAP-Rule" id="MF_00636"/>
    </source>
</evidence>
<protein>
    <recommendedName>
        <fullName evidence="1">RNase adapter protein RapZ</fullName>
    </recommendedName>
</protein>
<name>RAPZ_ECOBW</name>
<feature type="chain" id="PRO_1000212359" description="RNase adapter protein RapZ">
    <location>
        <begin position="1"/>
        <end position="284"/>
    </location>
</feature>
<feature type="region of interest" description="RNA-binding" evidence="1">
    <location>
        <begin position="266"/>
        <end position="284"/>
    </location>
</feature>
<feature type="binding site" evidence="1">
    <location>
        <begin position="8"/>
        <end position="15"/>
    </location>
    <ligand>
        <name>ATP</name>
        <dbReference type="ChEBI" id="CHEBI:30616"/>
    </ligand>
</feature>
<feature type="binding site" evidence="1">
    <location>
        <begin position="56"/>
        <end position="59"/>
    </location>
    <ligand>
        <name>GTP</name>
        <dbReference type="ChEBI" id="CHEBI:37565"/>
    </ligand>
</feature>
<dbReference type="EMBL" id="CP001396">
    <property type="protein sequence ID" value="ACR65054.1"/>
    <property type="molecule type" value="Genomic_DNA"/>
</dbReference>
<dbReference type="RefSeq" id="WP_000243741.1">
    <property type="nucleotide sequence ID" value="NC_012759.1"/>
</dbReference>
<dbReference type="SMR" id="C4ZSU4"/>
<dbReference type="GeneID" id="93778776"/>
<dbReference type="KEGG" id="ebw:BWG_2907"/>
<dbReference type="HOGENOM" id="CLU_059558_1_1_6"/>
<dbReference type="GO" id="GO:0005524">
    <property type="term" value="F:ATP binding"/>
    <property type="evidence" value="ECO:0007669"/>
    <property type="project" value="UniProtKB-UniRule"/>
</dbReference>
<dbReference type="GO" id="GO:0005525">
    <property type="term" value="F:GTP binding"/>
    <property type="evidence" value="ECO:0007669"/>
    <property type="project" value="UniProtKB-UniRule"/>
</dbReference>
<dbReference type="GO" id="GO:0003723">
    <property type="term" value="F:RNA binding"/>
    <property type="evidence" value="ECO:0007669"/>
    <property type="project" value="UniProtKB-KW"/>
</dbReference>
<dbReference type="Gene3D" id="3.40.50.300">
    <property type="entry name" value="P-loop containing nucleotide triphosphate hydrolases"/>
    <property type="match status" value="1"/>
</dbReference>
<dbReference type="HAMAP" id="MF_00636">
    <property type="entry name" value="RapZ_like"/>
    <property type="match status" value="1"/>
</dbReference>
<dbReference type="InterPro" id="IPR027417">
    <property type="entry name" value="P-loop_NTPase"/>
</dbReference>
<dbReference type="InterPro" id="IPR005337">
    <property type="entry name" value="RapZ-like"/>
</dbReference>
<dbReference type="InterPro" id="IPR053930">
    <property type="entry name" value="RapZ-like_N"/>
</dbReference>
<dbReference type="InterPro" id="IPR053931">
    <property type="entry name" value="RapZ_C"/>
</dbReference>
<dbReference type="NCBIfam" id="NF003828">
    <property type="entry name" value="PRK05416.1"/>
    <property type="match status" value="1"/>
</dbReference>
<dbReference type="PANTHER" id="PTHR30448">
    <property type="entry name" value="RNASE ADAPTER PROTEIN RAPZ"/>
    <property type="match status" value="1"/>
</dbReference>
<dbReference type="PANTHER" id="PTHR30448:SF0">
    <property type="entry name" value="RNASE ADAPTER PROTEIN RAPZ"/>
    <property type="match status" value="1"/>
</dbReference>
<dbReference type="Pfam" id="PF22740">
    <property type="entry name" value="PapZ_C"/>
    <property type="match status" value="1"/>
</dbReference>
<dbReference type="Pfam" id="PF03668">
    <property type="entry name" value="RapZ-like_N"/>
    <property type="match status" value="1"/>
</dbReference>
<dbReference type="PIRSF" id="PIRSF005052">
    <property type="entry name" value="P-loopkin"/>
    <property type="match status" value="1"/>
</dbReference>
<dbReference type="SUPFAM" id="SSF52540">
    <property type="entry name" value="P-loop containing nucleoside triphosphate hydrolases"/>
    <property type="match status" value="1"/>
</dbReference>
<gene>
    <name evidence="1" type="primary">rapZ</name>
    <name type="ordered locus">BWG_2907</name>
</gene>
<accession>C4ZSU4</accession>
<reference key="1">
    <citation type="journal article" date="2009" name="J. Bacteriol.">
        <title>Genomic sequencing reveals regulatory mutations and recombinational events in the widely used MC4100 lineage of Escherichia coli K-12.</title>
        <authorList>
            <person name="Ferenci T."/>
            <person name="Zhou Z."/>
            <person name="Betteridge T."/>
            <person name="Ren Y."/>
            <person name="Liu Y."/>
            <person name="Feng L."/>
            <person name="Reeves P.R."/>
            <person name="Wang L."/>
        </authorList>
    </citation>
    <scope>NUCLEOTIDE SEQUENCE [LARGE SCALE GENOMIC DNA]</scope>
    <source>
        <strain>K12 / MC4100 / BW2952</strain>
    </source>
</reference>
<organism>
    <name type="scientific">Escherichia coli (strain K12 / MC4100 / BW2952)</name>
    <dbReference type="NCBI Taxonomy" id="595496"/>
    <lineage>
        <taxon>Bacteria</taxon>
        <taxon>Pseudomonadati</taxon>
        <taxon>Pseudomonadota</taxon>
        <taxon>Gammaproteobacteria</taxon>
        <taxon>Enterobacterales</taxon>
        <taxon>Enterobacteriaceae</taxon>
        <taxon>Escherichia</taxon>
    </lineage>
</organism>